<reference key="1">
    <citation type="submission" date="2007-06" db="EMBL/GenBank/DDBJ databases">
        <title>Complete sequence of Sinorhizobium medicae WSM419 plasmid pSMED01.</title>
        <authorList>
            <consortium name="US DOE Joint Genome Institute"/>
            <person name="Copeland A."/>
            <person name="Lucas S."/>
            <person name="Lapidus A."/>
            <person name="Barry K."/>
            <person name="Glavina del Rio T."/>
            <person name="Dalin E."/>
            <person name="Tice H."/>
            <person name="Pitluck S."/>
            <person name="Chain P."/>
            <person name="Malfatti S."/>
            <person name="Shin M."/>
            <person name="Vergez L."/>
            <person name="Schmutz J."/>
            <person name="Larimer F."/>
            <person name="Land M."/>
            <person name="Hauser L."/>
            <person name="Kyrpides N."/>
            <person name="Mikhailova N."/>
            <person name="Reeve W.G."/>
            <person name="Richardson P."/>
        </authorList>
    </citation>
    <scope>NUCLEOTIDE SEQUENCE [LARGE SCALE GENOMIC DNA]</scope>
    <source>
        <strain>WSM419</strain>
    </source>
</reference>
<organism>
    <name type="scientific">Sinorhizobium medicae (strain WSM419)</name>
    <name type="common">Ensifer medicae</name>
    <dbReference type="NCBI Taxonomy" id="366394"/>
    <lineage>
        <taxon>Bacteria</taxon>
        <taxon>Pseudomonadati</taxon>
        <taxon>Pseudomonadota</taxon>
        <taxon>Alphaproteobacteria</taxon>
        <taxon>Hyphomicrobiales</taxon>
        <taxon>Rhizobiaceae</taxon>
        <taxon>Sinorhizobium/Ensifer group</taxon>
        <taxon>Sinorhizobium</taxon>
    </lineage>
</organism>
<feature type="chain" id="PRO_0000357930" description="NADH-quinone oxidoreductase subunit D 2">
    <location>
        <begin position="1"/>
        <end position="404"/>
    </location>
</feature>
<gene>
    <name evidence="1" type="primary">nuoD2</name>
    <name type="ordered locus">Smed_3620</name>
</gene>
<name>NUOD2_SINMW</name>
<keyword id="KW-0997">Cell inner membrane</keyword>
<keyword id="KW-1003">Cell membrane</keyword>
<keyword id="KW-0472">Membrane</keyword>
<keyword id="KW-0520">NAD</keyword>
<keyword id="KW-0614">Plasmid</keyword>
<keyword id="KW-0874">Quinone</keyword>
<keyword id="KW-1278">Translocase</keyword>
<keyword id="KW-0813">Transport</keyword>
<keyword id="KW-0830">Ubiquinone</keyword>
<geneLocation type="plasmid">
    <name>pSMED01</name>
</geneLocation>
<accession>A6UFK4</accession>
<sequence length="404" mass="45670">MTEVTELMRPEGEALNTKEVLLNLGPQHPSTHGVLRLVLQLDGEYVERIDPHIGYLHRGTEKLAESFTYTQIFPLTDRLDYLCPPSNNLAFALAVEKLLGIEAPIRAQYIRVMMAELARISGHLLITGALPMDLGAMTALLYAMREREMIMDLLEMITGARMHTSYCRVGGVREDLPDGFLPKIREFCEIFPNRIRDYERLIENNRVFLSRTQGIGVISAADAVDLGLSGPNLRASGVDWDIRRDEPYEIYDRLDFDVITREEGDCYARWLCRVDEMRESIRLIEQCMEQMPEGPFQVDIPTIAFPVDKERVHCSMEALIQHFDLSAYGFDVPAGEVYSVIEAPKGELGFYIISDGSPKPFRMKVRAPSFVNLQALFGVTNARYLADMIAVLGSLDPVMAEVDK</sequence>
<proteinExistence type="inferred from homology"/>
<evidence type="ECO:0000255" key="1">
    <source>
        <dbReference type="HAMAP-Rule" id="MF_01358"/>
    </source>
</evidence>
<dbReference type="EC" id="7.1.1.-" evidence="1"/>
<dbReference type="EMBL" id="CP000739">
    <property type="protein sequence ID" value="ABR62434.1"/>
    <property type="molecule type" value="Genomic_DNA"/>
</dbReference>
<dbReference type="RefSeq" id="YP_001312367.1">
    <property type="nucleotide sequence ID" value="NC_009620.1"/>
</dbReference>
<dbReference type="SMR" id="A6UFK4"/>
<dbReference type="KEGG" id="smd:Smed_3620"/>
<dbReference type="PATRIC" id="fig|366394.8.peg.49"/>
<dbReference type="HOGENOM" id="CLU_015134_1_2_5"/>
<dbReference type="OrthoDB" id="9801496at2"/>
<dbReference type="Proteomes" id="UP000001108">
    <property type="component" value="Plasmid pSMED01"/>
</dbReference>
<dbReference type="GO" id="GO:0005886">
    <property type="term" value="C:plasma membrane"/>
    <property type="evidence" value="ECO:0007669"/>
    <property type="project" value="UniProtKB-SubCell"/>
</dbReference>
<dbReference type="GO" id="GO:0051287">
    <property type="term" value="F:NAD binding"/>
    <property type="evidence" value="ECO:0007669"/>
    <property type="project" value="InterPro"/>
</dbReference>
<dbReference type="GO" id="GO:0050136">
    <property type="term" value="F:NADH:ubiquinone reductase (non-electrogenic) activity"/>
    <property type="evidence" value="ECO:0007669"/>
    <property type="project" value="UniProtKB-UniRule"/>
</dbReference>
<dbReference type="GO" id="GO:0048038">
    <property type="term" value="F:quinone binding"/>
    <property type="evidence" value="ECO:0007669"/>
    <property type="project" value="UniProtKB-KW"/>
</dbReference>
<dbReference type="Gene3D" id="1.10.645.10">
    <property type="entry name" value="Cytochrome-c3 Hydrogenase, chain B"/>
    <property type="match status" value="1"/>
</dbReference>
<dbReference type="HAMAP" id="MF_01358">
    <property type="entry name" value="NDH1_NuoD"/>
    <property type="match status" value="1"/>
</dbReference>
<dbReference type="InterPro" id="IPR001135">
    <property type="entry name" value="NADH_Q_OxRdtase_suD"/>
</dbReference>
<dbReference type="InterPro" id="IPR022885">
    <property type="entry name" value="NDH1_su_D/H"/>
</dbReference>
<dbReference type="InterPro" id="IPR029014">
    <property type="entry name" value="NiFe-Hase_large"/>
</dbReference>
<dbReference type="NCBIfam" id="TIGR01962">
    <property type="entry name" value="NuoD"/>
    <property type="match status" value="1"/>
</dbReference>
<dbReference type="NCBIfam" id="NF004739">
    <property type="entry name" value="PRK06075.1"/>
    <property type="match status" value="1"/>
</dbReference>
<dbReference type="PANTHER" id="PTHR11993:SF10">
    <property type="entry name" value="NADH DEHYDROGENASE [UBIQUINONE] IRON-SULFUR PROTEIN 2, MITOCHONDRIAL"/>
    <property type="match status" value="1"/>
</dbReference>
<dbReference type="PANTHER" id="PTHR11993">
    <property type="entry name" value="NADH-UBIQUINONE OXIDOREDUCTASE 49 KDA SUBUNIT"/>
    <property type="match status" value="1"/>
</dbReference>
<dbReference type="Pfam" id="PF00346">
    <property type="entry name" value="Complex1_49kDa"/>
    <property type="match status" value="1"/>
</dbReference>
<dbReference type="SUPFAM" id="SSF56762">
    <property type="entry name" value="HydB/Nqo4-like"/>
    <property type="match status" value="1"/>
</dbReference>
<comment type="function">
    <text evidence="1">NDH-1 shuttles electrons from NADH, via FMN and iron-sulfur (Fe-S) centers, to quinones in the respiratory chain. The immediate electron acceptor for the enzyme in this species is believed to be ubiquinone. Couples the redox reaction to proton translocation (for every two electrons transferred, four hydrogen ions are translocated across the cytoplasmic membrane), and thus conserves the redox energy in a proton gradient.</text>
</comment>
<comment type="catalytic activity">
    <reaction evidence="1">
        <text>a quinone + NADH + 5 H(+)(in) = a quinol + NAD(+) + 4 H(+)(out)</text>
        <dbReference type="Rhea" id="RHEA:57888"/>
        <dbReference type="ChEBI" id="CHEBI:15378"/>
        <dbReference type="ChEBI" id="CHEBI:24646"/>
        <dbReference type="ChEBI" id="CHEBI:57540"/>
        <dbReference type="ChEBI" id="CHEBI:57945"/>
        <dbReference type="ChEBI" id="CHEBI:132124"/>
    </reaction>
</comment>
<comment type="subunit">
    <text evidence="1">NDH-1 is composed of 14 different subunits. Subunits NuoB, C, D, E, F, and G constitute the peripheral sector of the complex.</text>
</comment>
<comment type="subcellular location">
    <subcellularLocation>
        <location evidence="1">Cell inner membrane</location>
        <topology evidence="1">Peripheral membrane protein</topology>
        <orientation evidence="1">Cytoplasmic side</orientation>
    </subcellularLocation>
</comment>
<comment type="similarity">
    <text evidence="1">Belongs to the complex I 49 kDa subunit family.</text>
</comment>
<protein>
    <recommendedName>
        <fullName evidence="1">NADH-quinone oxidoreductase subunit D 2</fullName>
        <ecNumber evidence="1">7.1.1.-</ecNumber>
    </recommendedName>
    <alternativeName>
        <fullName evidence="1">NADH dehydrogenase I subunit D 2</fullName>
    </alternativeName>
    <alternativeName>
        <fullName evidence="1">NDH-1 subunit D 2</fullName>
    </alternativeName>
</protein>